<gene>
    <name evidence="13" type="primary">rdgB</name>
    <name type="synonym">yggV</name>
    <name type="ordered locus">b2954</name>
    <name type="ordered locus">JW2921</name>
</gene>
<proteinExistence type="evidence at protein level"/>
<name>IXTPA_ECOLI</name>
<sequence>MQKVVLATGNVGKVRELASLLSDFGLDIVAQTDLGVDSAEETGLTFIENAILKARHAAKVTALPAIADDSGLAVDVLGGAPGIYSARYSGEDATDQKNLQKLLETMKDVPDDQRQARFHCVLVYLRHAEDPTPLVCHGSWPGVITREPAGTGGFGYDPIFFVPSEGKTAAELTREEKSAISHRGQALKLLLDALRNG</sequence>
<feature type="chain" id="PRO_0000178164" description="dITP/XTP pyrophosphatase">
    <location>
        <begin position="1"/>
        <end position="197"/>
    </location>
</feature>
<feature type="active site" description="Proton acceptor" evidence="12">
    <location>
        <position position="69"/>
    </location>
</feature>
<feature type="binding site" evidence="1 5 14">
    <location>
        <begin position="8"/>
        <end position="13"/>
    </location>
    <ligand>
        <name>substrate</name>
    </ligand>
</feature>
<feature type="binding site" evidence="1">
    <location>
        <position position="40"/>
    </location>
    <ligand>
        <name>Mg(2+)</name>
        <dbReference type="ChEBI" id="CHEBI:18420"/>
    </ligand>
</feature>
<feature type="binding site" evidence="1">
    <location>
        <position position="69"/>
    </location>
    <ligand>
        <name>Mg(2+)</name>
        <dbReference type="ChEBI" id="CHEBI:18420"/>
    </ligand>
</feature>
<feature type="binding site" evidence="5 14">
    <location>
        <position position="70"/>
    </location>
    <ligand>
        <name>substrate</name>
    </ligand>
</feature>
<feature type="binding site" evidence="1 5 14">
    <location>
        <begin position="154"/>
        <end position="157"/>
    </location>
    <ligand>
        <name>substrate</name>
    </ligand>
</feature>
<feature type="binding site" evidence="5 14">
    <location>
        <position position="177"/>
    </location>
    <ligand>
        <name>substrate</name>
    </ligand>
</feature>
<feature type="binding site" evidence="1 5 14">
    <location>
        <begin position="182"/>
        <end position="183"/>
    </location>
    <ligand>
        <name>substrate</name>
    </ligand>
</feature>
<feature type="mutagenesis site" description="Greatly reduced ITP pyrophosphatase activity." evidence="5">
    <original>T</original>
    <variation>A</variation>
    <location>
        <position position="8"/>
    </location>
</feature>
<feature type="mutagenesis site" description="Greatly reduced ITP pyrophosphatase activity." evidence="5">
    <original>N</original>
    <variation>A</variation>
    <location>
        <position position="10"/>
    </location>
</feature>
<feature type="mutagenesis site" description="Complete loss of enzymatic activity." evidence="5">
    <original>K</original>
    <variation>A</variation>
    <location>
        <position position="13"/>
    </location>
</feature>
<feature type="mutagenesis site" description="Complete loss of enzymatic activity." evidence="5">
    <original>E</original>
    <variation>A</variation>
    <location>
        <position position="41"/>
    </location>
</feature>
<feature type="mutagenesis site" description="Complete loss of enzymatic activity." evidence="5">
    <original>K</original>
    <variation>A</variation>
    <location>
        <position position="53"/>
    </location>
</feature>
<feature type="mutagenesis site" description="Greatly reduced ITP pyrophosphatase activity." evidence="5">
    <original>D</original>
    <variation>A</variation>
    <location>
        <position position="68"/>
    </location>
</feature>
<feature type="mutagenesis site" description="Complete loss of enzymatic activity." evidence="5">
    <original>D</original>
    <variation>A</variation>
    <location>
        <position position="69"/>
    </location>
</feature>
<feature type="mutagenesis site" description="Greatly reduced ITP pyrophosphatase activity." evidence="5">
    <original>G</original>
    <variation>A</variation>
    <location>
        <position position="71"/>
    </location>
</feature>
<feature type="mutagenesis site" description="Greatly reduced ITP pyrophosphatase activity." evidence="5">
    <original>F</original>
    <variation>A</variation>
    <location>
        <position position="154"/>
    </location>
</feature>
<feature type="mutagenesis site" description="Greatly reduced ITP pyrophosphatase activity." evidence="5">
    <original>F</original>
    <variation>A</variation>
    <location>
        <position position="160"/>
    </location>
</feature>
<feature type="mutagenesis site" description="Greatly reduced ITP pyrophosphatase activity." evidence="5">
    <original>R</original>
    <variation>A</variation>
    <location>
        <position position="183"/>
    </location>
</feature>
<feature type="strand" evidence="15">
    <location>
        <begin position="2"/>
        <end position="7"/>
    </location>
</feature>
<feature type="helix" evidence="15">
    <location>
        <begin position="11"/>
        <end position="21"/>
    </location>
</feature>
<feature type="helix" evidence="15">
    <location>
        <begin position="22"/>
        <end position="24"/>
    </location>
</feature>
<feature type="strand" evidence="15">
    <location>
        <begin position="26"/>
        <end position="30"/>
    </location>
</feature>
<feature type="turn" evidence="15">
    <location>
        <begin position="31"/>
        <end position="35"/>
    </location>
</feature>
<feature type="helix" evidence="15">
    <location>
        <begin position="46"/>
        <end position="61"/>
    </location>
</feature>
<feature type="strand" evidence="15">
    <location>
        <begin position="65"/>
        <end position="74"/>
    </location>
</feature>
<feature type="helix" evidence="15">
    <location>
        <begin position="75"/>
        <end position="77"/>
    </location>
</feature>
<feature type="helix" evidence="15">
    <location>
        <begin position="82"/>
        <end position="84"/>
    </location>
</feature>
<feature type="turn" evidence="15">
    <location>
        <begin position="86"/>
        <end position="89"/>
    </location>
</feature>
<feature type="helix" evidence="15">
    <location>
        <begin position="95"/>
        <end position="105"/>
    </location>
</feature>
<feature type="turn" evidence="15">
    <location>
        <begin position="106"/>
        <end position="108"/>
    </location>
</feature>
<feature type="helix" evidence="15">
    <location>
        <begin position="111"/>
        <end position="113"/>
    </location>
</feature>
<feature type="strand" evidence="15">
    <location>
        <begin position="115"/>
        <end position="127"/>
    </location>
</feature>
<feature type="strand" evidence="15">
    <location>
        <begin position="134"/>
        <end position="144"/>
    </location>
</feature>
<feature type="strand" evidence="15">
    <location>
        <begin position="152"/>
        <end position="154"/>
    </location>
</feature>
<feature type="helix" evidence="15">
    <location>
        <begin position="157"/>
        <end position="159"/>
    </location>
</feature>
<feature type="helix" evidence="15">
    <location>
        <begin position="163"/>
        <end position="165"/>
    </location>
</feature>
<feature type="strand" evidence="15">
    <location>
        <begin position="166"/>
        <end position="168"/>
    </location>
</feature>
<feature type="helix" evidence="15">
    <location>
        <begin position="169"/>
        <end position="171"/>
    </location>
</feature>
<feature type="helix" evidence="15">
    <location>
        <begin position="174"/>
        <end position="180"/>
    </location>
</feature>
<feature type="helix" evidence="15">
    <location>
        <begin position="182"/>
        <end position="195"/>
    </location>
</feature>
<keyword id="KW-0002">3D-structure</keyword>
<keyword id="KW-0378">Hydrolase</keyword>
<keyword id="KW-0460">Magnesium</keyword>
<keyword id="KW-0464">Manganese</keyword>
<keyword id="KW-0479">Metal-binding</keyword>
<keyword id="KW-0533">Nickel</keyword>
<keyword id="KW-0546">Nucleotide metabolism</keyword>
<keyword id="KW-0547">Nucleotide-binding</keyword>
<keyword id="KW-1185">Reference proteome</keyword>
<comment type="function">
    <text evidence="1 2 3 4 5">Pyrophosphatase that catalyzes the hydrolysis of nucleoside triphosphates to their monophosphate derivatives, with a high preference for the non-canonical purine nucleotides XTP (xanthosine triphosphate), dITP (deoxyinosine triphosphate) and ITP (PubMed:12297000, PubMed:17976651). Can also efficiently hydrolyze 2'-deoxy-N-6-hydroxylaminopurine triphosphate (dHAPTP) (PubMed:17090528). Seems to function as a house-cleaning enzyme that removes non-canonical purine nucleotides from the nucleotide pool, thus preventing their incorporation into DNA/RNA and avoiding chromosomal lesions (PubMed:12297000, PubMed:12730170, PubMed:17090528). To a much lesser extent, is also able to hydrolyze GTP, dGTP and dUTP, but shows very low activity toward the canonical nucleotides dATP, dCTP and dTTP and toward 8-oxo-dGTP, purine deoxyribose triphosphate, 2-aminopurine deoxyribose triphosphate and 2,6-diaminopurine deoxyribose triphosphate (PubMed:12297000, PubMed:17090528).</text>
</comment>
<comment type="function">
    <text evidence="6">Genetic interactions among priB, dam, lexA, nagC, polA, rdgB, rdgB, rep and uup link the PriA-PriB replication restart pathway to DNA double-strand break repair (PubMed:36326440).</text>
</comment>
<comment type="catalytic activity">
    <reaction evidence="1 2 5">
        <text>XTP + H2O = XMP + diphosphate + H(+)</text>
        <dbReference type="Rhea" id="RHEA:28610"/>
        <dbReference type="ChEBI" id="CHEBI:15377"/>
        <dbReference type="ChEBI" id="CHEBI:15378"/>
        <dbReference type="ChEBI" id="CHEBI:33019"/>
        <dbReference type="ChEBI" id="CHEBI:57464"/>
        <dbReference type="ChEBI" id="CHEBI:61314"/>
        <dbReference type="EC" id="3.6.1.66"/>
    </reaction>
</comment>
<comment type="catalytic activity">
    <reaction evidence="1 2 4 5">
        <text>dITP + H2O = dIMP + diphosphate + H(+)</text>
        <dbReference type="Rhea" id="RHEA:28342"/>
        <dbReference type="ChEBI" id="CHEBI:15377"/>
        <dbReference type="ChEBI" id="CHEBI:15378"/>
        <dbReference type="ChEBI" id="CHEBI:33019"/>
        <dbReference type="ChEBI" id="CHEBI:61194"/>
        <dbReference type="ChEBI" id="CHEBI:61382"/>
        <dbReference type="EC" id="3.6.1.66"/>
    </reaction>
</comment>
<comment type="catalytic activity">
    <reaction evidence="1 2 5">
        <text>ITP + H2O = IMP + diphosphate + H(+)</text>
        <dbReference type="Rhea" id="RHEA:29399"/>
        <dbReference type="ChEBI" id="CHEBI:15377"/>
        <dbReference type="ChEBI" id="CHEBI:15378"/>
        <dbReference type="ChEBI" id="CHEBI:33019"/>
        <dbReference type="ChEBI" id="CHEBI:58053"/>
        <dbReference type="ChEBI" id="CHEBI:61402"/>
        <dbReference type="EC" id="3.6.1.66"/>
    </reaction>
</comment>
<comment type="cofactor">
    <cofactor evidence="2 5">
        <name>Mg(2+)</name>
        <dbReference type="ChEBI" id="CHEBI:18420"/>
    </cofactor>
    <cofactor evidence="2">
        <name>Mn(2+)</name>
        <dbReference type="ChEBI" id="CHEBI:29035"/>
    </cofactor>
    <cofactor evidence="2">
        <name>Ni(2+)</name>
        <dbReference type="ChEBI" id="CHEBI:49786"/>
    </cofactor>
    <text evidence="2">Binds 1 divalent metal cation per subunit. Maximum activity is obtained with Mg(2+). Activity with Mn(2+) or Ni(2+) makes up 60-75% of the maximum rate.</text>
</comment>
<comment type="biophysicochemical properties">
    <kinetics>
        <KM evidence="2">0.33 mM for XTP (at pH 10.0 and 37 degrees Celsius)</KM>
        <KM evidence="2">0.36 mM for dITP (at pH 10.0 and 37 degrees Celsius)</KM>
        <KM evidence="2">0.41 mM for ITP (at pH 10.0 and 37 degrees Celsius)</KM>
        <KM evidence="4">22 uM for dITP (at pH 9.5 and 37 degrees Celsius)</KM>
        <KM evidence="4">792 uM for dGTP (at pH 9.5 and 37 degrees Celsius)</KM>
        <KM evidence="4">16.5 uM for dHAPTP (at pH 9.5 and 37 degrees Celsius)</KM>
        <KM evidence="5">23.3 uM for XTP (at pH 9.0 and 37 degrees Celsius)</KM>
        <KM evidence="5">11.3 uM for dITP (at pH 9.0 and 37 degrees Celsius)</KM>
        <KM evidence="5">5.6 uM for ITP (at pH 9.0 and 37 degrees Celsius)</KM>
        <KM evidence="5">312.6 uM for GTP (at pH 9.0 and 37 degrees Celsius)</KM>
        <KM evidence="5">181.5 uM for dGTP (at pH 9.0 and 37 degrees Celsius)</KM>
        <KM evidence="5">289.1 uM for TTP (at pH 9.0 and 37 degrees Celsius)</KM>
        <text evidence="2 4 5">Vmax values are similar for XTP, dITP and ITP. Activity toward dATP, dCTP and dTTP is less than 1% of the rate of XTP hydrolysis. dGTP and dUTP are hydrolyzed at 10-12% of the rate of XTP hydrolysis (PubMed:12297000). kcat is 5.7 sec(-1) with ITP or dHAPTP as substrate. kcat is 1.5 sec(-1) with dGTP as substrate (at pH 9.5 and 37 degrees Celsius) (PubMed:17090528). kcat is 19.9 sec(-1) with XTP as substrate. kcat is 13.2 sec(-1) with dITP as substrate. kcat is 18.9 sec(-1) with ITP as substrate. kcat is 0.85 sec(-1) with GTP as substrate. kcat is 0.37 sec(-1) with dGTP as substrate. kcat is 0.26 sec(-1) with TTP as substrate (at pH 9.0 and 37 degrees Celsius) (PubMed:17976651).</text>
    </kinetics>
    <phDependence>
        <text evidence="2 5">Optimum pH is 10-10.5 (PubMed:12297000). Optimum pH is 9.0 (PubMed:17976651). Reaction rates under neutral conditions are &lt;40% of the maximum (PubMed:12297000).</text>
    </phDependence>
</comment>
<comment type="subunit">
    <text evidence="1 2 5">Homodimer.</text>
</comment>
<comment type="disruption phenotype">
    <text evidence="3 6">Inactivation of this gene in a moa background (cells deficient in molybdopterin biosynthesis) results in increased N-6-hydroxylaminopurine (HAP) sensitivity, an increase in the level of mutagenesis, and increased recombination and SOS induction upon HAP exposure (PubMed:12730170). A double deletion with priB is disadvantageous to cells (PubMed:36326440).</text>
</comment>
<comment type="miscellaneous">
    <text evidence="2">Modified or damaged nucleotides such as 6-chloropurine deoxyribose triphosphate, 8-Br-dGTP, 5-Br-dCTP, 5-Br-dUTP, 7-deaza-dGTP, 7-methyl-GTP, N6-etheno-ATP, NAD, NADH, FAD, ADP-ribose, UPD-glucose, AppA and ApppA are not hydrolyzed by the enzyme.</text>
</comment>
<comment type="miscellaneous">
    <text evidence="10">The aberrant nucleotides XTP and dITP can be produced by oxidative deamination from purine nucleotides in cells; they are potentially mutagenic.</text>
</comment>
<comment type="similarity">
    <text evidence="1">Belongs to the HAM1 NTPase family.</text>
</comment>
<reference key="1">
    <citation type="journal article" date="1997" name="Science">
        <title>The complete genome sequence of Escherichia coli K-12.</title>
        <authorList>
            <person name="Blattner F.R."/>
            <person name="Plunkett G. III"/>
            <person name="Bloch C.A."/>
            <person name="Perna N.T."/>
            <person name="Burland V."/>
            <person name="Riley M."/>
            <person name="Collado-Vides J."/>
            <person name="Glasner J.D."/>
            <person name="Rode C.K."/>
            <person name="Mayhew G.F."/>
            <person name="Gregor J."/>
            <person name="Davis N.W."/>
            <person name="Kirkpatrick H.A."/>
            <person name="Goeden M.A."/>
            <person name="Rose D.J."/>
            <person name="Mau B."/>
            <person name="Shao Y."/>
        </authorList>
    </citation>
    <scope>NUCLEOTIDE SEQUENCE [LARGE SCALE GENOMIC DNA]</scope>
    <source>
        <strain>K12 / MG1655 / ATCC 47076</strain>
    </source>
</reference>
<reference key="2">
    <citation type="journal article" date="2006" name="Mol. Syst. Biol.">
        <title>Highly accurate genome sequences of Escherichia coli K-12 strains MG1655 and W3110.</title>
        <authorList>
            <person name="Hayashi K."/>
            <person name="Morooka N."/>
            <person name="Yamamoto Y."/>
            <person name="Fujita K."/>
            <person name="Isono K."/>
            <person name="Choi S."/>
            <person name="Ohtsubo E."/>
            <person name="Baba T."/>
            <person name="Wanner B.L."/>
            <person name="Mori H."/>
            <person name="Horiuchi T."/>
        </authorList>
    </citation>
    <scope>NUCLEOTIDE SEQUENCE [LARGE SCALE GENOMIC DNA]</scope>
    <source>
        <strain>K12 / W3110 / ATCC 27325 / DSM 5911</strain>
    </source>
</reference>
<reference key="3">
    <citation type="journal article" date="2002" name="J. Biochem. Mol. Biol.">
        <title>Identification of the dITP- and XTP-hydrolyzing protein from Escherichia coli.</title>
        <authorList>
            <person name="Chung J.H."/>
            <person name="Park H.-Y."/>
            <person name="Lee J.H."/>
            <person name="Jang Y."/>
        </authorList>
    </citation>
    <scope>FUNCTION</scope>
    <scope>CATALYTIC ACTIVITY</scope>
    <scope>SUBSTRATE SPECIFICITY</scope>
    <scope>SUBUNIT</scope>
    <scope>COFACTOR</scope>
    <scope>BIOPHYSICOCHEMICAL PROPERTIES</scope>
    <source>
        <strain>K12</strain>
    </source>
</reference>
<reference key="4">
    <citation type="journal article" date="2003" name="J. Bacteriol.">
        <title>Repair system for noncanonical purines in Escherichia coli.</title>
        <authorList>
            <person name="Burgis N.E."/>
            <person name="Brucker J.J."/>
            <person name="Cunningham R.P."/>
        </authorList>
    </citation>
    <scope>FUNCTION</scope>
    <scope>DISRUPTION PHENOTYPE</scope>
</reference>
<reference key="5">
    <citation type="journal article" date="2007" name="J. Biol. Chem.">
        <title>Substrate specificity of RdgB protein, a deoxyribonucleoside triphosphate pyrophosphohydrolase.</title>
        <authorList>
            <person name="Burgis N.E."/>
            <person name="Cunningham R.P."/>
        </authorList>
    </citation>
    <scope>FUNCTION</scope>
    <scope>CATALYTIC ACTIVITY</scope>
    <scope>SUBSTRATE SPECIFICITY</scope>
    <scope>BIOPHYSICOCHEMICAL PROPERTIES</scope>
</reference>
<reference key="6">
    <citation type="journal article" date="2022" name="G3 (Bethesda)">
        <title>Identification of genetic interactions with priB links the PriA/PriB DNA replication restart pathway to double-strand DNA break repair in Escherichia coli.</title>
        <authorList>
            <person name="McKenzie A.M."/>
            <person name="Henry C."/>
            <person name="Myers K.S."/>
            <person name="Place M.M."/>
            <person name="Keck J.L."/>
        </authorList>
    </citation>
    <scope>GENETIC INTERACTION</scope>
    <scope>DISRUPTION PHENOTYPE</scope>
    <source>
        <strain>K12 / MG1655 / ATCC 47076</strain>
    </source>
</reference>
<reference key="7">
    <citation type="journal article" date="2007" name="J. Mol. Biol.">
        <title>Molecular basis of the antimutagenic activity of the house-cleaning inosine triphosphate pyrophosphatase RdgB from Escherichia coli.</title>
        <authorList>
            <person name="Savchenko A."/>
            <person name="Proudfoot M."/>
            <person name="Skarina T."/>
            <person name="Singer A."/>
            <person name="Litvinova O."/>
            <person name="Sanishvili R."/>
            <person name="Brown G."/>
            <person name="Chirgadze N."/>
            <person name="Yakunin A.F."/>
        </authorList>
    </citation>
    <scope>X-RAY CRYSTALLOGRAPHY (1.50 ANGSTROMS) OF WILD-TYPE APOENZYME AND MUTANT ALA-69 IN COMPLEXES WITH IMP AND ITP</scope>
    <scope>FUNCTION</scope>
    <scope>CATALYTIC ACTIVITY</scope>
    <scope>BIOPHYSICOCHEMICAL PROPERTIES</scope>
    <scope>COFACTOR</scope>
    <scope>MUTAGENESIS OF THR-8; ASN-10; LYS-13; GLU-41; LYS-53; ASP-68; ASP-69; GLY-71; PHE-154; PHE-160 AND ARG-183</scope>
    <scope>REACTION MECHANISM</scope>
    <scope>ACTIVE SITE</scope>
    <scope>SUBUNIT</scope>
</reference>
<evidence type="ECO:0000255" key="1">
    <source>
        <dbReference type="HAMAP-Rule" id="MF_01405"/>
    </source>
</evidence>
<evidence type="ECO:0000269" key="2">
    <source>
    </source>
</evidence>
<evidence type="ECO:0000269" key="3">
    <source>
    </source>
</evidence>
<evidence type="ECO:0000269" key="4">
    <source>
    </source>
</evidence>
<evidence type="ECO:0000269" key="5">
    <source>
    </source>
</evidence>
<evidence type="ECO:0000269" key="6">
    <source>
    </source>
</evidence>
<evidence type="ECO:0000303" key="7">
    <source>
    </source>
</evidence>
<evidence type="ECO:0000303" key="8">
    <source>
    </source>
</evidence>
<evidence type="ECO:0000303" key="9">
    <source>
    </source>
</evidence>
<evidence type="ECO:0000305" key="10"/>
<evidence type="ECO:0000305" key="11">
    <source>
    </source>
</evidence>
<evidence type="ECO:0000305" key="12">
    <source>
    </source>
</evidence>
<evidence type="ECO:0000312" key="13">
    <source>
        <dbReference type="EMBL" id="AAC75991.1"/>
    </source>
</evidence>
<evidence type="ECO:0007744" key="14">
    <source>
        <dbReference type="PDB" id="2Q16"/>
    </source>
</evidence>
<evidence type="ECO:0007829" key="15">
    <source>
        <dbReference type="PDB" id="1K7K"/>
    </source>
</evidence>
<dbReference type="EC" id="3.6.1.66" evidence="1 2 5"/>
<dbReference type="EMBL" id="U28377">
    <property type="protein sequence ID" value="AAA69121.1"/>
    <property type="molecule type" value="Genomic_DNA"/>
</dbReference>
<dbReference type="EMBL" id="U00096">
    <property type="protein sequence ID" value="AAC75991.1"/>
    <property type="molecule type" value="Genomic_DNA"/>
</dbReference>
<dbReference type="EMBL" id="AP009048">
    <property type="protein sequence ID" value="BAE77017.1"/>
    <property type="molecule type" value="Genomic_DNA"/>
</dbReference>
<dbReference type="PIR" id="A65081">
    <property type="entry name" value="A65081"/>
</dbReference>
<dbReference type="RefSeq" id="NP_417429.1">
    <property type="nucleotide sequence ID" value="NC_000913.3"/>
</dbReference>
<dbReference type="RefSeq" id="WP_001174777.1">
    <property type="nucleotide sequence ID" value="NZ_SSUV01000019.1"/>
</dbReference>
<dbReference type="PDB" id="1K7K">
    <property type="method" value="X-ray"/>
    <property type="resolution" value="1.50 A"/>
    <property type="chains" value="A=1-197"/>
</dbReference>
<dbReference type="PDB" id="2PYU">
    <property type="method" value="X-ray"/>
    <property type="resolution" value="2.02 A"/>
    <property type="chains" value="A=1-197"/>
</dbReference>
<dbReference type="PDB" id="2Q16">
    <property type="method" value="X-ray"/>
    <property type="resolution" value="1.95 A"/>
    <property type="chains" value="A/B=1-197"/>
</dbReference>
<dbReference type="PDBsum" id="1K7K"/>
<dbReference type="PDBsum" id="2PYU"/>
<dbReference type="PDBsum" id="2Q16"/>
<dbReference type="SMR" id="P52061"/>
<dbReference type="BioGRID" id="4260898">
    <property type="interactions" value="106"/>
</dbReference>
<dbReference type="BioGRID" id="851750">
    <property type="interactions" value="2"/>
</dbReference>
<dbReference type="FunCoup" id="P52061">
    <property type="interactions" value="813"/>
</dbReference>
<dbReference type="IntAct" id="P52061">
    <property type="interactions" value="3"/>
</dbReference>
<dbReference type="STRING" id="511145.b2954"/>
<dbReference type="jPOST" id="P52061"/>
<dbReference type="PaxDb" id="511145-b2954"/>
<dbReference type="EnsemblBacteria" id="AAC75991">
    <property type="protein sequence ID" value="AAC75991"/>
    <property type="gene ID" value="b2954"/>
</dbReference>
<dbReference type="GeneID" id="947429"/>
<dbReference type="KEGG" id="ecj:JW2921"/>
<dbReference type="KEGG" id="eco:b2954"/>
<dbReference type="KEGG" id="ecoc:C3026_16165"/>
<dbReference type="PATRIC" id="fig|1411691.4.peg.3778"/>
<dbReference type="EchoBASE" id="EB2807"/>
<dbReference type="eggNOG" id="COG0127">
    <property type="taxonomic scope" value="Bacteria"/>
</dbReference>
<dbReference type="HOGENOM" id="CLU_082080_0_3_6"/>
<dbReference type="InParanoid" id="P52061"/>
<dbReference type="OMA" id="YDPIFQP"/>
<dbReference type="OrthoDB" id="9807456at2"/>
<dbReference type="PhylomeDB" id="P52061"/>
<dbReference type="BioCyc" id="EcoCyc:G7530-MONOMER"/>
<dbReference type="BioCyc" id="MetaCyc:G7530-MONOMER"/>
<dbReference type="EvolutionaryTrace" id="P52061"/>
<dbReference type="PRO" id="PR:P52061"/>
<dbReference type="Proteomes" id="UP000000625">
    <property type="component" value="Chromosome"/>
</dbReference>
<dbReference type="GO" id="GO:0005737">
    <property type="term" value="C:cytoplasm"/>
    <property type="evidence" value="ECO:0000318"/>
    <property type="project" value="GO_Central"/>
</dbReference>
<dbReference type="GO" id="GO:0005829">
    <property type="term" value="C:cytosol"/>
    <property type="evidence" value="ECO:0000314"/>
    <property type="project" value="EcoCyc"/>
</dbReference>
<dbReference type="GO" id="GO:0035870">
    <property type="term" value="F:dITP diphosphatase activity"/>
    <property type="evidence" value="ECO:0000314"/>
    <property type="project" value="UniProtKB"/>
</dbReference>
<dbReference type="GO" id="GO:0036220">
    <property type="term" value="F:ITP diphosphatase activity"/>
    <property type="evidence" value="ECO:0000314"/>
    <property type="project" value="UniProtKB"/>
</dbReference>
<dbReference type="GO" id="GO:0000287">
    <property type="term" value="F:magnesium ion binding"/>
    <property type="evidence" value="ECO:0000314"/>
    <property type="project" value="EcoCyc"/>
</dbReference>
<dbReference type="GO" id="GO:0047429">
    <property type="term" value="F:nucleoside triphosphate diphosphatase activity"/>
    <property type="evidence" value="ECO:0000314"/>
    <property type="project" value="EcoCyc"/>
</dbReference>
<dbReference type="GO" id="GO:0000166">
    <property type="term" value="F:nucleotide binding"/>
    <property type="evidence" value="ECO:0007669"/>
    <property type="project" value="UniProtKB-KW"/>
</dbReference>
<dbReference type="GO" id="GO:0042803">
    <property type="term" value="F:protein homodimerization activity"/>
    <property type="evidence" value="ECO:0000314"/>
    <property type="project" value="UniProtKB"/>
</dbReference>
<dbReference type="GO" id="GO:0017111">
    <property type="term" value="F:ribonucleoside triphosphate phosphatase activity"/>
    <property type="evidence" value="ECO:0007669"/>
    <property type="project" value="InterPro"/>
</dbReference>
<dbReference type="GO" id="GO:0036222">
    <property type="term" value="F:XTP diphosphatase activity"/>
    <property type="evidence" value="ECO:0000314"/>
    <property type="project" value="UniProtKB"/>
</dbReference>
<dbReference type="GO" id="GO:0009143">
    <property type="term" value="P:nucleoside triphosphate catabolic process"/>
    <property type="evidence" value="ECO:0000314"/>
    <property type="project" value="EcoCyc"/>
</dbReference>
<dbReference type="GO" id="GO:0009117">
    <property type="term" value="P:nucleotide metabolic process"/>
    <property type="evidence" value="ECO:0007669"/>
    <property type="project" value="UniProtKB-KW"/>
</dbReference>
<dbReference type="GO" id="GO:0009146">
    <property type="term" value="P:purine nucleoside triphosphate catabolic process"/>
    <property type="evidence" value="ECO:0000314"/>
    <property type="project" value="UniProtKB"/>
</dbReference>
<dbReference type="CDD" id="cd00515">
    <property type="entry name" value="HAM1"/>
    <property type="match status" value="1"/>
</dbReference>
<dbReference type="FunFam" id="3.90.950.10:FF:000001">
    <property type="entry name" value="dITP/XTP pyrophosphatase"/>
    <property type="match status" value="1"/>
</dbReference>
<dbReference type="Gene3D" id="3.90.950.10">
    <property type="match status" value="1"/>
</dbReference>
<dbReference type="HAMAP" id="MF_01405">
    <property type="entry name" value="Non_canon_purine_NTPase"/>
    <property type="match status" value="1"/>
</dbReference>
<dbReference type="InterPro" id="IPR020922">
    <property type="entry name" value="dITP/XTP_pyrophosphatase"/>
</dbReference>
<dbReference type="InterPro" id="IPR029001">
    <property type="entry name" value="ITPase-like_fam"/>
</dbReference>
<dbReference type="InterPro" id="IPR002637">
    <property type="entry name" value="RdgB/HAM1"/>
</dbReference>
<dbReference type="NCBIfam" id="NF011397">
    <property type="entry name" value="PRK14822.1"/>
    <property type="match status" value="1"/>
</dbReference>
<dbReference type="NCBIfam" id="TIGR00042">
    <property type="entry name" value="RdgB/HAM1 family non-canonical purine NTP pyrophosphatase"/>
    <property type="match status" value="1"/>
</dbReference>
<dbReference type="PANTHER" id="PTHR11067:SF9">
    <property type="entry name" value="INOSINE TRIPHOSPHATE PYROPHOSPHATASE"/>
    <property type="match status" value="1"/>
</dbReference>
<dbReference type="PANTHER" id="PTHR11067">
    <property type="entry name" value="INOSINE TRIPHOSPHATE PYROPHOSPHATASE/HAM1 PROTEIN"/>
    <property type="match status" value="1"/>
</dbReference>
<dbReference type="Pfam" id="PF01725">
    <property type="entry name" value="Ham1p_like"/>
    <property type="match status" value="1"/>
</dbReference>
<dbReference type="SUPFAM" id="SSF52972">
    <property type="entry name" value="ITPase-like"/>
    <property type="match status" value="1"/>
</dbReference>
<protein>
    <recommendedName>
        <fullName evidence="1 11 12">dITP/XTP pyrophosphatase</fullName>
        <ecNumber evidence="1 2 5">3.6.1.66</ecNumber>
    </recommendedName>
    <alternativeName>
        <fullName evidence="8">Deoxyribonucleoside triphosphate pyrophosphohydrolase</fullName>
    </alternativeName>
    <alternativeName>
        <fullName evidence="9">Inosine triphosphate pyrophosphatase</fullName>
        <shortName evidence="9">ITPase</shortName>
    </alternativeName>
    <alternativeName>
        <fullName evidence="1 11">Non-canonical purine NTP pyrophosphatase</fullName>
    </alternativeName>
    <alternativeName>
        <fullName evidence="1 11">Non-standard purine NTP pyrophosphatase</fullName>
    </alternativeName>
    <alternativeName>
        <fullName evidence="1 11">Nucleoside-triphosphate diphosphatase</fullName>
    </alternativeName>
    <alternativeName>
        <fullName evidence="1 11">Nucleoside-triphosphate pyrophosphatase</fullName>
        <shortName evidence="1 7">NTPase</shortName>
    </alternativeName>
</protein>
<organism>
    <name type="scientific">Escherichia coli (strain K12)</name>
    <dbReference type="NCBI Taxonomy" id="83333"/>
    <lineage>
        <taxon>Bacteria</taxon>
        <taxon>Pseudomonadati</taxon>
        <taxon>Pseudomonadota</taxon>
        <taxon>Gammaproteobacteria</taxon>
        <taxon>Enterobacterales</taxon>
        <taxon>Enterobacteriaceae</taxon>
        <taxon>Escherichia</taxon>
    </lineage>
</organism>
<accession>P52061</accession>
<accession>Q2M9N9</accession>